<evidence type="ECO:0000255" key="1">
    <source>
        <dbReference type="HAMAP-Rule" id="MF_01543"/>
    </source>
</evidence>
<sequence>MLTDIEISRQTKHRPITQIAEKFGITSSELVPFGDAKAKVKLSILKRVDDNLEGKLVIVTAVTPTPFGEGKTVTSIGLTQGLNALGKKACACIRQPSMGPVFGIKGGAAGGGYSQVVPMEELNLHLTGDIHAVSSAHNLAAAAIDARLFHESRMTADEYREQSGQAPLNIDPEKILWRRVVDHNERSLRNITVGLGANNGPIHDSGFDITAASELMAILALSLDLKDMRRRIGKLVLALDSLGQPITAETLGVAGAMTVIMSDAIEPTLMQTLTGDPCLIHAGPFANIAHGNSSIIADRIALKLADIVVTEGGFGSDMGFEKFCNIKTRVSGKTPDAAVVVVTLKALKANSGIDSQNDINRPDMARLQVGFANLKWHIDNVSQYGAPVVVAINRFPTDTFEELTWLKAKVLETAAFGCEICEGFSQGAKGAEALARVVVSATEQKSDFKFLYQLDESIESKLLTIAEAGYGAAGIKLSPDAKIQLQEINSMGLDKLAVCVAKTPLSISHEPKVKGVPTDFELPITQLKINAGAGFITALVGKVMTMPGLGIKPGYLNVDINEDDEIVGLA</sequence>
<comment type="catalytic activity">
    <reaction evidence="1">
        <text>(6S)-5,6,7,8-tetrahydrofolate + formate + ATP = (6R)-10-formyltetrahydrofolate + ADP + phosphate</text>
        <dbReference type="Rhea" id="RHEA:20221"/>
        <dbReference type="ChEBI" id="CHEBI:15740"/>
        <dbReference type="ChEBI" id="CHEBI:30616"/>
        <dbReference type="ChEBI" id="CHEBI:43474"/>
        <dbReference type="ChEBI" id="CHEBI:57453"/>
        <dbReference type="ChEBI" id="CHEBI:195366"/>
        <dbReference type="ChEBI" id="CHEBI:456216"/>
        <dbReference type="EC" id="6.3.4.3"/>
    </reaction>
</comment>
<comment type="pathway">
    <text evidence="1">One-carbon metabolism; tetrahydrofolate interconversion.</text>
</comment>
<comment type="similarity">
    <text evidence="1">Belongs to the formate--tetrahydrofolate ligase family.</text>
</comment>
<protein>
    <recommendedName>
        <fullName evidence="1">Formate--tetrahydrofolate ligase</fullName>
        <ecNumber evidence="1">6.3.4.3</ecNumber>
    </recommendedName>
    <alternativeName>
        <fullName evidence="1">Formyltetrahydrofolate synthetase</fullName>
        <shortName evidence="1">FHS</shortName>
        <shortName evidence="1">FTHFS</shortName>
    </alternativeName>
</protein>
<dbReference type="EC" id="6.3.4.3" evidence="1"/>
<dbReference type="EMBL" id="CP000821">
    <property type="protein sequence ID" value="ABV35224.1"/>
    <property type="molecule type" value="Genomic_DNA"/>
</dbReference>
<dbReference type="RefSeq" id="WP_012140961.1">
    <property type="nucleotide sequence ID" value="NC_009831.1"/>
</dbReference>
<dbReference type="SMR" id="A8FQV1"/>
<dbReference type="STRING" id="425104.Ssed_0612"/>
<dbReference type="KEGG" id="sse:Ssed_0612"/>
<dbReference type="eggNOG" id="COG2759">
    <property type="taxonomic scope" value="Bacteria"/>
</dbReference>
<dbReference type="HOGENOM" id="CLU_003601_3_3_6"/>
<dbReference type="OrthoDB" id="9761733at2"/>
<dbReference type="UniPathway" id="UPA00193"/>
<dbReference type="Proteomes" id="UP000002015">
    <property type="component" value="Chromosome"/>
</dbReference>
<dbReference type="GO" id="GO:0005524">
    <property type="term" value="F:ATP binding"/>
    <property type="evidence" value="ECO:0007669"/>
    <property type="project" value="UniProtKB-UniRule"/>
</dbReference>
<dbReference type="GO" id="GO:0004329">
    <property type="term" value="F:formate-tetrahydrofolate ligase activity"/>
    <property type="evidence" value="ECO:0007669"/>
    <property type="project" value="UniProtKB-UniRule"/>
</dbReference>
<dbReference type="GO" id="GO:0035999">
    <property type="term" value="P:tetrahydrofolate interconversion"/>
    <property type="evidence" value="ECO:0007669"/>
    <property type="project" value="UniProtKB-UniRule"/>
</dbReference>
<dbReference type="CDD" id="cd00477">
    <property type="entry name" value="FTHFS"/>
    <property type="match status" value="1"/>
</dbReference>
<dbReference type="Gene3D" id="3.30.1510.10">
    <property type="entry name" value="Domain 2, N(10)-formyltetrahydrofolate synthetase"/>
    <property type="match status" value="1"/>
</dbReference>
<dbReference type="Gene3D" id="3.10.410.10">
    <property type="entry name" value="Formyltetrahydrofolate synthetase, domain 3"/>
    <property type="match status" value="1"/>
</dbReference>
<dbReference type="Gene3D" id="3.40.50.300">
    <property type="entry name" value="P-loop containing nucleotide triphosphate hydrolases"/>
    <property type="match status" value="1"/>
</dbReference>
<dbReference type="HAMAP" id="MF_01543">
    <property type="entry name" value="FTHFS"/>
    <property type="match status" value="1"/>
</dbReference>
<dbReference type="InterPro" id="IPR000559">
    <property type="entry name" value="Formate_THF_ligase"/>
</dbReference>
<dbReference type="InterPro" id="IPR020628">
    <property type="entry name" value="Formate_THF_ligase_CS"/>
</dbReference>
<dbReference type="InterPro" id="IPR027417">
    <property type="entry name" value="P-loop_NTPase"/>
</dbReference>
<dbReference type="NCBIfam" id="NF010030">
    <property type="entry name" value="PRK13505.1"/>
    <property type="match status" value="1"/>
</dbReference>
<dbReference type="NCBIfam" id="NF010031">
    <property type="entry name" value="PRK13506.1"/>
    <property type="match status" value="1"/>
</dbReference>
<dbReference type="Pfam" id="PF01268">
    <property type="entry name" value="FTHFS"/>
    <property type="match status" value="1"/>
</dbReference>
<dbReference type="SUPFAM" id="SSF52540">
    <property type="entry name" value="P-loop containing nucleoside triphosphate hydrolases"/>
    <property type="match status" value="1"/>
</dbReference>
<dbReference type="PROSITE" id="PS00721">
    <property type="entry name" value="FTHFS_1"/>
    <property type="match status" value="1"/>
</dbReference>
<name>FTHS_SHESH</name>
<keyword id="KW-0067">ATP-binding</keyword>
<keyword id="KW-0436">Ligase</keyword>
<keyword id="KW-0547">Nucleotide-binding</keyword>
<keyword id="KW-0554">One-carbon metabolism</keyword>
<keyword id="KW-1185">Reference proteome</keyword>
<accession>A8FQV1</accession>
<reference key="1">
    <citation type="submission" date="2007-08" db="EMBL/GenBank/DDBJ databases">
        <title>Complete sequence of Shewanella sediminis HAW-EB3.</title>
        <authorList>
            <consortium name="US DOE Joint Genome Institute"/>
            <person name="Copeland A."/>
            <person name="Lucas S."/>
            <person name="Lapidus A."/>
            <person name="Barry K."/>
            <person name="Glavina del Rio T."/>
            <person name="Dalin E."/>
            <person name="Tice H."/>
            <person name="Pitluck S."/>
            <person name="Chertkov O."/>
            <person name="Brettin T."/>
            <person name="Bruce D."/>
            <person name="Detter J.C."/>
            <person name="Han C."/>
            <person name="Schmutz J."/>
            <person name="Larimer F."/>
            <person name="Land M."/>
            <person name="Hauser L."/>
            <person name="Kyrpides N."/>
            <person name="Kim E."/>
            <person name="Zhao J.-S."/>
            <person name="Richardson P."/>
        </authorList>
    </citation>
    <scope>NUCLEOTIDE SEQUENCE [LARGE SCALE GENOMIC DNA]</scope>
    <source>
        <strain>HAW-EB3</strain>
    </source>
</reference>
<gene>
    <name evidence="1" type="primary">fhs</name>
    <name type="ordered locus">Ssed_0612</name>
</gene>
<proteinExistence type="inferred from homology"/>
<feature type="chain" id="PRO_1000087658" description="Formate--tetrahydrofolate ligase">
    <location>
        <begin position="1"/>
        <end position="570"/>
    </location>
</feature>
<feature type="binding site" evidence="1">
    <location>
        <begin position="65"/>
        <end position="72"/>
    </location>
    <ligand>
        <name>ATP</name>
        <dbReference type="ChEBI" id="CHEBI:30616"/>
    </ligand>
</feature>
<organism>
    <name type="scientific">Shewanella sediminis (strain HAW-EB3)</name>
    <dbReference type="NCBI Taxonomy" id="425104"/>
    <lineage>
        <taxon>Bacteria</taxon>
        <taxon>Pseudomonadati</taxon>
        <taxon>Pseudomonadota</taxon>
        <taxon>Gammaproteobacteria</taxon>
        <taxon>Alteromonadales</taxon>
        <taxon>Shewanellaceae</taxon>
        <taxon>Shewanella</taxon>
    </lineage>
</organism>